<feature type="chain" id="PRO_1000145670" description="Multidrug resistance protein MdtC">
    <location>
        <begin position="1"/>
        <end position="1025"/>
    </location>
</feature>
<feature type="transmembrane region" description="Helical" evidence="1">
    <location>
        <begin position="3"/>
        <end position="23"/>
    </location>
</feature>
<feature type="transmembrane region" description="Helical" evidence="1">
    <location>
        <begin position="333"/>
        <end position="353"/>
    </location>
</feature>
<feature type="transmembrane region" description="Helical" evidence="1">
    <location>
        <begin position="360"/>
        <end position="380"/>
    </location>
</feature>
<feature type="transmembrane region" description="Helical" evidence="1">
    <location>
        <begin position="387"/>
        <end position="407"/>
    </location>
</feature>
<feature type="transmembrane region" description="Helical" evidence="1">
    <location>
        <begin position="431"/>
        <end position="451"/>
    </location>
</feature>
<feature type="transmembrane region" description="Helical" evidence="1">
    <location>
        <begin position="463"/>
        <end position="483"/>
    </location>
</feature>
<feature type="transmembrane region" description="Helical" evidence="1">
    <location>
        <begin position="528"/>
        <end position="548"/>
    </location>
</feature>
<feature type="transmembrane region" description="Helical" evidence="1">
    <location>
        <begin position="853"/>
        <end position="873"/>
    </location>
</feature>
<feature type="transmembrane region" description="Helical" evidence="1">
    <location>
        <begin position="875"/>
        <end position="895"/>
    </location>
</feature>
<feature type="transmembrane region" description="Helical" evidence="1">
    <location>
        <begin position="897"/>
        <end position="917"/>
    </location>
</feature>
<feature type="transmembrane region" description="Helical" evidence="1">
    <location>
        <begin position="953"/>
        <end position="973"/>
    </location>
</feature>
<feature type="transmembrane region" description="Helical" evidence="1">
    <location>
        <begin position="984"/>
        <end position="1004"/>
    </location>
</feature>
<name>MDTC_ECODH</name>
<evidence type="ECO:0000255" key="1">
    <source>
        <dbReference type="HAMAP-Rule" id="MF_01424"/>
    </source>
</evidence>
<sequence>MKFFALFIYRPVATILLSVAITLCGILGFRMLPVAPLPQVDFPVIIVSASLPGASPETMASSVATPLERSLGRIAGVSEMTSSSSLGSTRIILQFDFDRDINGAARDVQAAINAAQSLLPSGMPSRPTYRKANPSDAPIMILTLTSDTYSQGELYDFASTQLAPTISQIDGVGDVDVGGSSLPAVRVGLNPQALFNQGVSLDDVRTAVSNANVRKPQGALEDGTHRWQIQTNDELKTAAEYQPLIIHYNNGGAVRLGDVATVTDSVQDVRNAGMTNAKPAILLMIRKLPEANIIQTVDSIRAKLPELQETIPAAIDLQIAQDRSPTIRASLEEVEQTLIISVALVILVVFLFLRSGRATIIPAVSVPVSLIGTFAAMYLCGFSLNNLSLMALTIATGFVVDDAIVVLENIARHLEAGMKPLQAALQGTREVGFTVLSMSLSLVAVFLPLLLMGGLPGRLLREFAVTLSVAIGISLLVSLTLTPMMCGWMLKASKPREQKRLRGFGRMLVALQQGYGKSLKWVLNHTRLVGVVLLGTIALNIWLYISIPKTFFPEQDTGVLMGGIQADQSISFQAMRGKLQDFMKIIRDDPAVDNVTGFTGGSRVNSGMMFITLKPRDERSETAQQIIDRLRVKLAKEPGANLFLMAVQDIRVGGRQSNASYQYTLLSDDLAALREWEPKIRKKLATLPELADVNSDQQDNGAEMNLVYDRDTMARLGIDVQAANSLLNNAFGQRQISTIYQPMNQYKVVMEVDPRYTQDISALEKMFVINNEGKAIPLSYFAKWQPANAPLSVNHQGLSAASTISFNLPTGKSLSDASAAIDRAMTQLGVPSTVRGSFAGTAQVFQETMNSQVILIIAAIATVYIVLGILYESYVHPLTILSTLPSAGVGALLALELFNAPFSLIALIGIMLLIGIVKKNAIMMVDFALEAQRHGNLTPQEAIFQACLLRFRPIMMTTLAALFGALPLVLSGGDGSELRQPLGITIVGGLVMSQLLTLYTTPVVYLFFDRLRLRFSRKPKQTVTE</sequence>
<keyword id="KW-0997">Cell inner membrane</keyword>
<keyword id="KW-1003">Cell membrane</keyword>
<keyword id="KW-0472">Membrane</keyword>
<keyword id="KW-0812">Transmembrane</keyword>
<keyword id="KW-1133">Transmembrane helix</keyword>
<keyword id="KW-0813">Transport</keyword>
<gene>
    <name evidence="1" type="primary">mdtC</name>
    <name type="ordered locus">ECDH10B_2228</name>
</gene>
<dbReference type="EMBL" id="CP000948">
    <property type="protein sequence ID" value="ACB03248.1"/>
    <property type="molecule type" value="Genomic_DNA"/>
</dbReference>
<dbReference type="RefSeq" id="WP_000667481.1">
    <property type="nucleotide sequence ID" value="NC_010473.1"/>
</dbReference>
<dbReference type="SMR" id="B1X7H2"/>
<dbReference type="KEGG" id="ecd:ECDH10B_2228"/>
<dbReference type="HOGENOM" id="CLU_002755_1_2_6"/>
<dbReference type="GO" id="GO:0005886">
    <property type="term" value="C:plasma membrane"/>
    <property type="evidence" value="ECO:0007669"/>
    <property type="project" value="UniProtKB-SubCell"/>
</dbReference>
<dbReference type="GO" id="GO:0042910">
    <property type="term" value="F:xenobiotic transmembrane transporter activity"/>
    <property type="evidence" value="ECO:0007669"/>
    <property type="project" value="TreeGrafter"/>
</dbReference>
<dbReference type="FunFam" id="1.20.1640.10:FF:000001">
    <property type="entry name" value="Efflux pump membrane transporter"/>
    <property type="match status" value="1"/>
</dbReference>
<dbReference type="FunFam" id="3.30.70.1430:FF:000001">
    <property type="entry name" value="Efflux pump membrane transporter"/>
    <property type="match status" value="1"/>
</dbReference>
<dbReference type="FunFam" id="3.30.2090.10:FF:000004">
    <property type="entry name" value="Multidrug resistance protein MdtC"/>
    <property type="match status" value="1"/>
</dbReference>
<dbReference type="FunFam" id="3.30.2090.10:FF:000005">
    <property type="entry name" value="Multidrug resistance protein MdtC"/>
    <property type="match status" value="1"/>
</dbReference>
<dbReference type="FunFam" id="3.30.70.1430:FF:000004">
    <property type="entry name" value="Multidrug resistance protein MdtC"/>
    <property type="match status" value="1"/>
</dbReference>
<dbReference type="Gene3D" id="3.30.70.1430">
    <property type="entry name" value="Multidrug efflux transporter AcrB pore domain"/>
    <property type="match status" value="2"/>
</dbReference>
<dbReference type="Gene3D" id="3.30.70.1440">
    <property type="entry name" value="Multidrug efflux transporter AcrB pore domain"/>
    <property type="match status" value="1"/>
</dbReference>
<dbReference type="Gene3D" id="3.30.70.1320">
    <property type="entry name" value="Multidrug efflux transporter AcrB pore domain like"/>
    <property type="match status" value="1"/>
</dbReference>
<dbReference type="Gene3D" id="3.30.2090.10">
    <property type="entry name" value="Multidrug efflux transporter AcrB TolC docking domain, DN and DC subdomains"/>
    <property type="match status" value="2"/>
</dbReference>
<dbReference type="Gene3D" id="1.20.1640.10">
    <property type="entry name" value="Multidrug efflux transporter AcrB transmembrane domain"/>
    <property type="match status" value="2"/>
</dbReference>
<dbReference type="HAMAP" id="MF_01424">
    <property type="entry name" value="MdtC"/>
    <property type="match status" value="1"/>
</dbReference>
<dbReference type="InterPro" id="IPR027463">
    <property type="entry name" value="AcrB_DN_DC_subdom"/>
</dbReference>
<dbReference type="InterPro" id="IPR001036">
    <property type="entry name" value="Acrflvin-R"/>
</dbReference>
<dbReference type="InterPro" id="IPR023931">
    <property type="entry name" value="Multidrug-R_MdtC"/>
</dbReference>
<dbReference type="NCBIfam" id="NF007905">
    <property type="entry name" value="PRK10614.1"/>
    <property type="match status" value="1"/>
</dbReference>
<dbReference type="NCBIfam" id="NF033617">
    <property type="entry name" value="RND_permease_2"/>
    <property type="match status" value="1"/>
</dbReference>
<dbReference type="PANTHER" id="PTHR32063">
    <property type="match status" value="1"/>
</dbReference>
<dbReference type="PANTHER" id="PTHR32063:SF34">
    <property type="entry name" value="MULTIDRUG RESISTANCE PROTEIN MDTC"/>
    <property type="match status" value="1"/>
</dbReference>
<dbReference type="Pfam" id="PF00873">
    <property type="entry name" value="ACR_tran"/>
    <property type="match status" value="1"/>
</dbReference>
<dbReference type="PRINTS" id="PR00702">
    <property type="entry name" value="ACRIFLAVINRP"/>
</dbReference>
<dbReference type="SUPFAM" id="SSF82693">
    <property type="entry name" value="Multidrug efflux transporter AcrB pore domain, PN1, PN2, PC1 and PC2 subdomains"/>
    <property type="match status" value="4"/>
</dbReference>
<dbReference type="SUPFAM" id="SSF82714">
    <property type="entry name" value="Multidrug efflux transporter AcrB TolC docking domain, DN and DC subdomains"/>
    <property type="match status" value="2"/>
</dbReference>
<dbReference type="SUPFAM" id="SSF82866">
    <property type="entry name" value="Multidrug efflux transporter AcrB transmembrane domain"/>
    <property type="match status" value="2"/>
</dbReference>
<accession>B1X7H2</accession>
<reference key="1">
    <citation type="journal article" date="2008" name="J. Bacteriol.">
        <title>The complete genome sequence of Escherichia coli DH10B: insights into the biology of a laboratory workhorse.</title>
        <authorList>
            <person name="Durfee T."/>
            <person name="Nelson R."/>
            <person name="Baldwin S."/>
            <person name="Plunkett G. III"/>
            <person name="Burland V."/>
            <person name="Mau B."/>
            <person name="Petrosino J.F."/>
            <person name="Qin X."/>
            <person name="Muzny D.M."/>
            <person name="Ayele M."/>
            <person name="Gibbs R.A."/>
            <person name="Csorgo B."/>
            <person name="Posfai G."/>
            <person name="Weinstock G.M."/>
            <person name="Blattner F.R."/>
        </authorList>
    </citation>
    <scope>NUCLEOTIDE SEQUENCE [LARGE SCALE GENOMIC DNA]</scope>
    <source>
        <strain>K12 / DH10B</strain>
    </source>
</reference>
<organism>
    <name type="scientific">Escherichia coli (strain K12 / DH10B)</name>
    <dbReference type="NCBI Taxonomy" id="316385"/>
    <lineage>
        <taxon>Bacteria</taxon>
        <taxon>Pseudomonadati</taxon>
        <taxon>Pseudomonadota</taxon>
        <taxon>Gammaproteobacteria</taxon>
        <taxon>Enterobacterales</taxon>
        <taxon>Enterobacteriaceae</taxon>
        <taxon>Escherichia</taxon>
    </lineage>
</organism>
<proteinExistence type="evidence at transcript level"/>
<comment type="function">
    <text evidence="1">The MdtABC tripartite complex confers resistance against novobiocin and deoxycholate.</text>
</comment>
<comment type="subunit">
    <text evidence="1">Part of a tripartite efflux system composed of MdtA, MdtB and MdtC. MdtC forms a heteromultimer with MdtB.</text>
</comment>
<comment type="subcellular location">
    <subcellularLocation>
        <location evidence="1">Cell inner membrane</location>
        <topology evidence="1">Multi-pass membrane protein</topology>
    </subcellularLocation>
</comment>
<comment type="induction">
    <text>The mdtABC operon is transcriptionally activated by BaeR.</text>
</comment>
<comment type="similarity">
    <text evidence="1">Belongs to the resistance-nodulation-cell division (RND) (TC 2.A.6) family. MdtC subfamily.</text>
</comment>
<protein>
    <recommendedName>
        <fullName evidence="1">Multidrug resistance protein MdtC</fullName>
    </recommendedName>
    <alternativeName>
        <fullName evidence="1">Multidrug transporter MdtC</fullName>
    </alternativeName>
</protein>